<reference key="1">
    <citation type="journal article" date="2006" name="Proc. Natl. Acad. Sci. U.S.A.">
        <title>Comparative genomics of the lactic acid bacteria.</title>
        <authorList>
            <person name="Makarova K.S."/>
            <person name="Slesarev A."/>
            <person name="Wolf Y.I."/>
            <person name="Sorokin A."/>
            <person name="Mirkin B."/>
            <person name="Koonin E.V."/>
            <person name="Pavlov A."/>
            <person name="Pavlova N."/>
            <person name="Karamychev V."/>
            <person name="Polouchine N."/>
            <person name="Shakhova V."/>
            <person name="Grigoriev I."/>
            <person name="Lou Y."/>
            <person name="Rohksar D."/>
            <person name="Lucas S."/>
            <person name="Huang K."/>
            <person name="Goodstein D.M."/>
            <person name="Hawkins T."/>
            <person name="Plengvidhya V."/>
            <person name="Welker D."/>
            <person name="Hughes J."/>
            <person name="Goh Y."/>
            <person name="Benson A."/>
            <person name="Baldwin K."/>
            <person name="Lee J.-H."/>
            <person name="Diaz-Muniz I."/>
            <person name="Dosti B."/>
            <person name="Smeianov V."/>
            <person name="Wechter W."/>
            <person name="Barabote R."/>
            <person name="Lorca G."/>
            <person name="Altermann E."/>
            <person name="Barrangou R."/>
            <person name="Ganesan B."/>
            <person name="Xie Y."/>
            <person name="Rawsthorne H."/>
            <person name="Tamir D."/>
            <person name="Parker C."/>
            <person name="Breidt F."/>
            <person name="Broadbent J.R."/>
            <person name="Hutkins R."/>
            <person name="O'Sullivan D."/>
            <person name="Steele J."/>
            <person name="Unlu G."/>
            <person name="Saier M.H. Jr."/>
            <person name="Klaenhammer T."/>
            <person name="Richardson P."/>
            <person name="Kozyavkin S."/>
            <person name="Weimer B.C."/>
            <person name="Mills D.A."/>
        </authorList>
    </citation>
    <scope>NUCLEOTIDE SEQUENCE [LARGE SCALE GENOMIC DNA]</scope>
    <source>
        <strain>SK11</strain>
    </source>
</reference>
<evidence type="ECO:0000255" key="1">
    <source>
        <dbReference type="HAMAP-Rule" id="MF_01539"/>
    </source>
</evidence>
<organism>
    <name type="scientific">Lactococcus lactis subsp. cremoris (strain SK11)</name>
    <dbReference type="NCBI Taxonomy" id="272622"/>
    <lineage>
        <taxon>Bacteria</taxon>
        <taxon>Bacillati</taxon>
        <taxon>Bacillota</taxon>
        <taxon>Bacilli</taxon>
        <taxon>Lactobacillales</taxon>
        <taxon>Streptococcaceae</taxon>
        <taxon>Lactococcus</taxon>
        <taxon>Lactococcus cremoris subsp. cremoris</taxon>
    </lineage>
</organism>
<accession>Q032L8</accession>
<feature type="chain" id="PRO_0000300179" description="tRNA(Met) cytidine acetate ligase">
    <location>
        <begin position="1"/>
        <end position="389"/>
    </location>
</feature>
<feature type="binding site" evidence="1">
    <location>
        <begin position="8"/>
        <end position="21"/>
    </location>
    <ligand>
        <name>ATP</name>
        <dbReference type="ChEBI" id="CHEBI:30616"/>
    </ligand>
</feature>
<feature type="binding site" evidence="1">
    <location>
        <position position="97"/>
    </location>
    <ligand>
        <name>ATP</name>
        <dbReference type="ChEBI" id="CHEBI:30616"/>
    </ligand>
</feature>
<feature type="binding site" evidence="1">
    <location>
        <position position="153"/>
    </location>
    <ligand>
        <name>ATP</name>
        <dbReference type="ChEBI" id="CHEBI:30616"/>
    </ligand>
</feature>
<feature type="binding site" evidence="1">
    <location>
        <position position="176"/>
    </location>
    <ligand>
        <name>ATP</name>
        <dbReference type="ChEBI" id="CHEBI:30616"/>
    </ligand>
</feature>
<gene>
    <name evidence="1" type="primary">tmcAL</name>
    <name type="ordered locus">LACR_0236</name>
</gene>
<keyword id="KW-0067">ATP-binding</keyword>
<keyword id="KW-0963">Cytoplasm</keyword>
<keyword id="KW-0436">Ligase</keyword>
<keyword id="KW-0547">Nucleotide-binding</keyword>
<keyword id="KW-0694">RNA-binding</keyword>
<keyword id="KW-0819">tRNA processing</keyword>
<keyword id="KW-0820">tRNA-binding</keyword>
<protein>
    <recommendedName>
        <fullName evidence="1">tRNA(Met) cytidine acetate ligase</fullName>
        <ecNumber evidence="1">6.3.4.-</ecNumber>
    </recommendedName>
</protein>
<comment type="function">
    <text evidence="1">Catalyzes the formation of N(4)-acetylcytidine (ac(4)C) at the wobble position of elongator tRNA(Met), using acetate and ATP as substrates. First activates an acetate ion to form acetyladenylate (Ac-AMP) and then transfers the acetyl group to tRNA to form ac(4)C34.</text>
</comment>
<comment type="catalytic activity">
    <reaction evidence="1">
        <text>cytidine(34) in elongator tRNA(Met) + acetate + ATP = N(4)-acetylcytidine(34) in elongator tRNA(Met) + AMP + diphosphate</text>
        <dbReference type="Rhea" id="RHEA:58144"/>
        <dbReference type="Rhea" id="RHEA-COMP:10693"/>
        <dbReference type="Rhea" id="RHEA-COMP:10694"/>
        <dbReference type="ChEBI" id="CHEBI:30089"/>
        <dbReference type="ChEBI" id="CHEBI:30616"/>
        <dbReference type="ChEBI" id="CHEBI:33019"/>
        <dbReference type="ChEBI" id="CHEBI:74900"/>
        <dbReference type="ChEBI" id="CHEBI:82748"/>
        <dbReference type="ChEBI" id="CHEBI:456215"/>
    </reaction>
</comment>
<comment type="subcellular location">
    <subcellularLocation>
        <location evidence="1">Cytoplasm</location>
    </subcellularLocation>
</comment>
<comment type="similarity">
    <text evidence="1">Belongs to the TmcAL family.</text>
</comment>
<proteinExistence type="inferred from homology"/>
<dbReference type="EC" id="6.3.4.-" evidence="1"/>
<dbReference type="EMBL" id="CP000425">
    <property type="protein sequence ID" value="ABJ71854.1"/>
    <property type="molecule type" value="Genomic_DNA"/>
</dbReference>
<dbReference type="RefSeq" id="WP_011675267.1">
    <property type="nucleotide sequence ID" value="NC_008527.1"/>
</dbReference>
<dbReference type="SMR" id="Q032L8"/>
<dbReference type="KEGG" id="llc:LACR_0236"/>
<dbReference type="HOGENOM" id="CLU_038915_0_2_9"/>
<dbReference type="Proteomes" id="UP000000240">
    <property type="component" value="Chromosome"/>
</dbReference>
<dbReference type="GO" id="GO:0005737">
    <property type="term" value="C:cytoplasm"/>
    <property type="evidence" value="ECO:0007669"/>
    <property type="project" value="UniProtKB-SubCell"/>
</dbReference>
<dbReference type="GO" id="GO:0005524">
    <property type="term" value="F:ATP binding"/>
    <property type="evidence" value="ECO:0007669"/>
    <property type="project" value="UniProtKB-KW"/>
</dbReference>
<dbReference type="GO" id="GO:0016879">
    <property type="term" value="F:ligase activity, forming carbon-nitrogen bonds"/>
    <property type="evidence" value="ECO:0007669"/>
    <property type="project" value="UniProtKB-UniRule"/>
</dbReference>
<dbReference type="GO" id="GO:0000049">
    <property type="term" value="F:tRNA binding"/>
    <property type="evidence" value="ECO:0007669"/>
    <property type="project" value="UniProtKB-KW"/>
</dbReference>
<dbReference type="GO" id="GO:0006400">
    <property type="term" value="P:tRNA modification"/>
    <property type="evidence" value="ECO:0007669"/>
    <property type="project" value="UniProtKB-UniRule"/>
</dbReference>
<dbReference type="Gene3D" id="3.40.50.620">
    <property type="entry name" value="HUPs"/>
    <property type="match status" value="1"/>
</dbReference>
<dbReference type="HAMAP" id="MF_01539">
    <property type="entry name" value="TmcAL"/>
    <property type="match status" value="1"/>
</dbReference>
<dbReference type="InterPro" id="IPR014729">
    <property type="entry name" value="Rossmann-like_a/b/a_fold"/>
</dbReference>
<dbReference type="InterPro" id="IPR008513">
    <property type="entry name" value="tRNA(Met)_cyd_acetate_ligase"/>
</dbReference>
<dbReference type="NCBIfam" id="NF010191">
    <property type="entry name" value="PRK13670.1"/>
    <property type="match status" value="1"/>
</dbReference>
<dbReference type="PANTHER" id="PTHR37825">
    <property type="entry name" value="TRNA(MET) CYTIDINE ACETATE LIGASE"/>
    <property type="match status" value="1"/>
</dbReference>
<dbReference type="PANTHER" id="PTHR37825:SF1">
    <property type="entry name" value="TRNA(MET) CYTIDINE ACETATE LIGASE"/>
    <property type="match status" value="1"/>
</dbReference>
<dbReference type="Pfam" id="PF05636">
    <property type="entry name" value="HIGH_NTase1"/>
    <property type="match status" value="1"/>
</dbReference>
<dbReference type="SUPFAM" id="SSF52374">
    <property type="entry name" value="Nucleotidylyl transferase"/>
    <property type="match status" value="1"/>
</dbReference>
<sequence>MTKITGIIAEFNPFHKGHEYLLNQIDGPKIVAMSGNWMQRGEPAIFDKWTRAEMALSCGADLVVELPVTVSVQAADFFASGAVDILKNLGITDLAFGSESAIDYNEIADIYETKETEMESFIKALPEQLSYPEKTQMMWQHFTGIKFDGNTPNHVLALAYAKAAAGKNINLQAIKRVGKFHSTKLTEGFASATALRQSLFSLTERKNLLTEQTHQSVSQKPAILDLSAIKNHVPSVILETYASPKTNWAAYFPLLQYKIRLDDHLENIFQVNQELSVRLKNAVKSAKNFDELVELVYTKRYTKARVRRLLTYILLNIPKEFNLPKEIHILGFSKAGQEILAQNRGKIISKIGQKPWDELTQKADEIYQLGNVDFKEQNFGRKPIIKREK</sequence>
<name>TMCAL_LACLS</name>